<accession>P33492</accession>
<name>VP7_ROTH9</name>
<feature type="signal peptide" evidence="2">
    <location>
        <begin position="1"/>
        <end position="50"/>
    </location>
</feature>
<feature type="chain" id="PRO_0000149594" description="Outer capsid glycoprotein VP7" evidence="2">
    <location>
        <begin position="51"/>
        <end position="326"/>
    </location>
</feature>
<feature type="region of interest" description="CNP motif; interaction with ITGAV/ITGB3" evidence="2">
    <location>
        <begin position="165"/>
        <end position="167"/>
    </location>
</feature>
<feature type="region of interest" description="LVD motif; interaction with ITGA4/ITGB1 heterodimer" evidence="2">
    <location>
        <begin position="237"/>
        <end position="239"/>
    </location>
</feature>
<feature type="region of interest" description="GPR motif; interaction with ITGAX/ITGB2" evidence="2">
    <location>
        <begin position="253"/>
        <end position="255"/>
    </location>
</feature>
<feature type="binding site" evidence="2">
    <location>
        <position position="95"/>
    </location>
    <ligand>
        <name>Ca(2+)</name>
        <dbReference type="ChEBI" id="CHEBI:29108"/>
        <label>1</label>
    </ligand>
</feature>
<feature type="binding site" evidence="2">
    <location>
        <position position="177"/>
    </location>
    <ligand>
        <name>Ca(2+)</name>
        <dbReference type="ChEBI" id="CHEBI:29108"/>
        <label>2</label>
    </ligand>
</feature>
<feature type="binding site" evidence="2">
    <location>
        <position position="206"/>
    </location>
    <ligand>
        <name>Ca(2+)</name>
        <dbReference type="ChEBI" id="CHEBI:29108"/>
        <label>1</label>
    </ligand>
</feature>
<feature type="binding site" evidence="2">
    <location>
        <position position="214"/>
    </location>
    <ligand>
        <name>Ca(2+)</name>
        <dbReference type="ChEBI" id="CHEBI:29108"/>
        <label>1</label>
    </ligand>
</feature>
<feature type="binding site" evidence="2">
    <location>
        <position position="216"/>
    </location>
    <ligand>
        <name>Ca(2+)</name>
        <dbReference type="ChEBI" id="CHEBI:29108"/>
        <label>1</label>
    </ligand>
</feature>
<feature type="binding site" evidence="2">
    <location>
        <position position="228"/>
    </location>
    <ligand>
        <name>Ca(2+)</name>
        <dbReference type="ChEBI" id="CHEBI:29108"/>
        <label>2</label>
    </ligand>
</feature>
<feature type="binding site" evidence="2">
    <location>
        <position position="229"/>
    </location>
    <ligand>
        <name>Ca(2+)</name>
        <dbReference type="ChEBI" id="CHEBI:29108"/>
        <label>2</label>
    </ligand>
</feature>
<feature type="binding site" evidence="2">
    <location>
        <position position="231"/>
    </location>
    <ligand>
        <name>Ca(2+)</name>
        <dbReference type="ChEBI" id="CHEBI:29108"/>
        <label>2</label>
    </ligand>
</feature>
<feature type="binding site" evidence="2">
    <location>
        <position position="301"/>
    </location>
    <ligand>
        <name>Ca(2+)</name>
        <dbReference type="ChEBI" id="CHEBI:29108"/>
        <label>2</label>
    </ligand>
</feature>
<feature type="glycosylation site" description="N-linked (GlcNAc...) asparagine; by host" evidence="1">
    <location>
        <position position="69"/>
    </location>
</feature>
<feature type="disulfide bond" evidence="2">
    <location>
        <begin position="82"/>
        <end position="135"/>
    </location>
</feature>
<feature type="disulfide bond" evidence="2">
    <location>
        <begin position="165"/>
        <end position="249"/>
    </location>
</feature>
<feature type="disulfide bond" evidence="2">
    <location>
        <begin position="191"/>
        <end position="244"/>
    </location>
</feature>
<feature type="disulfide bond" evidence="2">
    <location>
        <begin position="196"/>
        <end position="207"/>
    </location>
</feature>
<feature type="splice variant" id="VSP_038592" description="In isoform 2." evidence="3">
    <location>
        <begin position="1"/>
        <end position="29"/>
    </location>
</feature>
<organismHost>
    <name type="scientific">Homo sapiens</name>
    <name type="common">Human</name>
    <dbReference type="NCBI Taxonomy" id="9606"/>
</organismHost>
<comment type="function">
    <text evidence="2">Calcium-binding protein that interacts with rotavirus cell receptors once the initial attachment by VP4 has been achieved. Rotavirus attachment and entry into the host cell probably involves multiple sequential contacts between the outer capsid proteins VP4 and VP7, and the cell receptors. Following entry into the host cell, low intracellular or intravesicular Ca(2+) concentration probably causes the calcium-stabilized VP7 trimers to dissociate from the virion. This step is probably necessary for the membrane-disrupting entry step and the release of VP4, which is locked onto the virion by VP7.</text>
</comment>
<comment type="subunit">
    <text evidence="2">Homotrimer; disulfide-linked. 2 Ca(2+) ions bound at each subunit interface in the trimer hold the trimer together. Interacts with the intermediate capsid protein VP6. Interacts with the outer capsid protein VP5*.</text>
</comment>
<comment type="subcellular location">
    <subcellularLocation>
        <location evidence="2">Virion</location>
    </subcellularLocation>
    <subcellularLocation>
        <location evidence="2">Host endoplasmic reticulum lumen</location>
    </subcellularLocation>
    <text evidence="2">The outer layer contains 780 copies of VP7, grouped as 260 trimers. Immature double-layered particles assembled in the cytoplasm bud across the membrane of the endoplasmic reticulum, acquiring during this process a transient lipid membrane that is modified with the ER resident viral glycoproteins NSP4 and VP7; these enveloped particles also contain VP4. As the particles move towards the interior of the ER cisternae, the transient lipid membrane and the non-structural protein NSP4 are lost, while the virus surface proteins VP4 and VP7 rearrange to form the outermost virus protein layer, yielding mature infectious triple-layered particles.</text>
</comment>
<comment type="alternative products">
    <event type="alternative initiation"/>
    <isoform>
        <id>P33492-1</id>
        <name>1</name>
        <sequence type="displayed"/>
    </isoform>
    <isoform>
        <id>P33492-2</id>
        <name>2</name>
        <sequence type="described" ref="VSP_038592"/>
    </isoform>
</comment>
<comment type="PTM">
    <text evidence="2">N-glycosylated.</text>
</comment>
<comment type="PTM">
    <text evidence="2">The N-terminus is blocked possibly by pyroglutamic acid.</text>
</comment>
<comment type="miscellaneous">
    <text evidence="2">Some rotavirus strains are neuraminidase-sensitive and require sialic acid to attach to the cell surface. Some rotavirus strains are integrin-dependent. Some rotavirus strains depend on ganglioside for their entry into the host cell. Hsp70 also seems to be involved in the entry of some strains.</text>
</comment>
<comment type="miscellaneous">
    <text evidence="2">In group A rotaviruses, VP7 defines the G serotype.</text>
</comment>
<comment type="miscellaneous">
    <molecule>Isoform 2</molecule>
    <text evidence="3">Produced by alternative initiation at Met-30 of isoform 1.</text>
</comment>
<comment type="similarity">
    <text evidence="2">Belongs to the rotavirus VP7 family.</text>
</comment>
<keyword id="KW-0024">Alternative initiation</keyword>
<keyword id="KW-0106">Calcium</keyword>
<keyword id="KW-0167">Capsid protein</keyword>
<keyword id="KW-1015">Disulfide bond</keyword>
<keyword id="KW-0325">Glycoprotein</keyword>
<keyword id="KW-1038">Host endoplasmic reticulum</keyword>
<keyword id="KW-0945">Host-virus interaction</keyword>
<keyword id="KW-0479">Metal-binding</keyword>
<keyword id="KW-1152">Outer capsid protein</keyword>
<keyword id="KW-0732">Signal</keyword>
<keyword id="KW-1146">T=13 icosahedral capsid protein</keyword>
<keyword id="KW-0946">Virion</keyword>
<reference key="1">
    <citation type="journal article" date="1990" name="Bioorg. Khim.">
        <title>Use of the polymerase chain reaction for analysis of rotaviruses. Nucleotide sequence of a gene, coding for the basic neutralizing antigen VR7 of a human rotavirus with a new G-serotype.</title>
        <authorList>
            <person name="Bessarab I.N."/>
            <person name="Novikova P.A."/>
            <person name="Borodin A.M."/>
        </authorList>
    </citation>
    <scope>NUCLEOTIDE SEQUENCE</scope>
</reference>
<evidence type="ECO:0000255" key="1"/>
<evidence type="ECO:0000255" key="2">
    <source>
        <dbReference type="HAMAP-Rule" id="MF_04131"/>
    </source>
</evidence>
<evidence type="ECO:0000305" key="3"/>
<dbReference type="PIR" id="JN0307">
    <property type="entry name" value="JN0307"/>
</dbReference>
<dbReference type="SMR" id="P33492"/>
<dbReference type="GO" id="GO:0044166">
    <property type="term" value="C:host cell endoplasmic reticulum lumen"/>
    <property type="evidence" value="ECO:0007669"/>
    <property type="project" value="UniProtKB-SubCell"/>
</dbReference>
<dbReference type="GO" id="GO:0039621">
    <property type="term" value="C:T=13 icosahedral viral capsid"/>
    <property type="evidence" value="ECO:0007669"/>
    <property type="project" value="UniProtKB-UniRule"/>
</dbReference>
<dbReference type="GO" id="GO:0039624">
    <property type="term" value="C:viral outer capsid"/>
    <property type="evidence" value="ECO:0007669"/>
    <property type="project" value="UniProtKB-UniRule"/>
</dbReference>
<dbReference type="GO" id="GO:0046872">
    <property type="term" value="F:metal ion binding"/>
    <property type="evidence" value="ECO:0007669"/>
    <property type="project" value="UniProtKB-KW"/>
</dbReference>
<dbReference type="Gene3D" id="3.40.50.11130">
    <property type="entry name" value="Glycoprotein VP7, domain 1"/>
    <property type="match status" value="1"/>
</dbReference>
<dbReference type="Gene3D" id="2.60.120.800">
    <property type="entry name" value="Rotavirus outer-layer protein VP7, domain 2"/>
    <property type="match status" value="1"/>
</dbReference>
<dbReference type="HAMAP" id="MF_04130">
    <property type="entry name" value="Rota_VP7"/>
    <property type="match status" value="1"/>
</dbReference>
<dbReference type="HAMAP" id="MF_04131">
    <property type="entry name" value="Rota_VP7_A"/>
    <property type="match status" value="1"/>
</dbReference>
<dbReference type="InterPro" id="IPR001963">
    <property type="entry name" value="VP7"/>
</dbReference>
<dbReference type="InterPro" id="IPR042207">
    <property type="entry name" value="VP7_1"/>
</dbReference>
<dbReference type="InterPro" id="IPR042210">
    <property type="entry name" value="VP7_2"/>
</dbReference>
<dbReference type="Pfam" id="PF00434">
    <property type="entry name" value="VP7"/>
    <property type="match status" value="1"/>
</dbReference>
<sequence length="326" mass="37323">MYGIEYTTILTFLISLIFINYIFKTITSTMDFIIYRFLFVMVVLPPFVKTQNYGVNLPITGSMDTPYINSTVSESFLTSTLCIYYPNDVTNQITDNKWKDTLSQLFLTKGWSTGSVYFKEYADLASFSVNPRLYCDYNIVLMKYDGNSQLDMSELADLILNEWLCNPMDVKLYYYQQTDEANKWISMGDSCTIKVCPLNSQTLGIGCSTTDPTTFEEVASIEKLVITDVVDGINHKLDVTTATCTIRNCKKLGPRENVAIIQVGGSNILDITADPTTAPQTERMMRINWKKWWQVFYTIVDYVNQIVQVMSKRSRSLNSAAFYYRV</sequence>
<organism>
    <name type="scientific">Rotavirus A (isolate RVA/Human/-/RK9/XXXX/GXP[X])</name>
    <name type="common">RV-A</name>
    <dbReference type="NCBI Taxonomy" id="33722"/>
    <lineage>
        <taxon>Viruses</taxon>
        <taxon>Riboviria</taxon>
        <taxon>Orthornavirae</taxon>
        <taxon>Duplornaviricota</taxon>
        <taxon>Resentoviricetes</taxon>
        <taxon>Reovirales</taxon>
        <taxon>Sedoreoviridae</taxon>
        <taxon>Rotavirus</taxon>
        <taxon>Rotavirus A</taxon>
    </lineage>
</organism>
<protein>
    <recommendedName>
        <fullName evidence="2">Outer capsid glycoprotein VP7</fullName>
    </recommendedName>
</protein>
<proteinExistence type="inferred from homology"/>